<reference key="1">
    <citation type="journal article" date="1991" name="Gene">
        <title>Polymerase chain reaction amplification, cloning, sequence determination and homologies of streptococcal ATPase-encoding DNAs.</title>
        <authorList>
            <person name="Quivey R.G. Jr."/>
            <person name="Faustoferri R.C."/>
            <person name="Belli W.A."/>
            <person name="Flores J.S."/>
        </authorList>
    </citation>
    <scope>NUCLEOTIDE SEQUENCE [GENOMIC DNA]</scope>
</reference>
<keyword id="KW-0066">ATP synthesis</keyword>
<keyword id="KW-0067">ATP-binding</keyword>
<keyword id="KW-1003">Cell membrane</keyword>
<keyword id="KW-0139">CF(1)</keyword>
<keyword id="KW-0375">Hydrogen ion transport</keyword>
<keyword id="KW-0406">Ion transport</keyword>
<keyword id="KW-0472">Membrane</keyword>
<keyword id="KW-0547">Nucleotide-binding</keyword>
<keyword id="KW-1278">Translocase</keyword>
<keyword id="KW-0813">Transport</keyword>
<accession>P21933</accession>
<name>ATPB_STRDO</name>
<gene>
    <name type="primary">atpD</name>
    <name type="synonym">uncD</name>
</gene>
<organism>
    <name type="scientific">Streptococcus downei</name>
    <name type="common">Streptococcus sobrinus</name>
    <dbReference type="NCBI Taxonomy" id="1317"/>
    <lineage>
        <taxon>Bacteria</taxon>
        <taxon>Bacillati</taxon>
        <taxon>Bacillota</taxon>
        <taxon>Bacilli</taxon>
        <taxon>Lactobacillales</taxon>
        <taxon>Streptococcaceae</taxon>
        <taxon>Streptococcus</taxon>
    </lineage>
</organism>
<dbReference type="EC" id="7.1.2.2"/>
<dbReference type="EMBL" id="M80668">
    <property type="protein sequence ID" value="AAA26851.1"/>
    <property type="status" value="ALT_INIT"/>
    <property type="molecule type" value="Genomic_DNA"/>
</dbReference>
<dbReference type="SMR" id="P21933"/>
<dbReference type="GO" id="GO:0005886">
    <property type="term" value="C:plasma membrane"/>
    <property type="evidence" value="ECO:0007669"/>
    <property type="project" value="UniProtKB-SubCell"/>
</dbReference>
<dbReference type="GO" id="GO:0045259">
    <property type="term" value="C:proton-transporting ATP synthase complex"/>
    <property type="evidence" value="ECO:0007669"/>
    <property type="project" value="UniProtKB-KW"/>
</dbReference>
<dbReference type="GO" id="GO:0005524">
    <property type="term" value="F:ATP binding"/>
    <property type="evidence" value="ECO:0007669"/>
    <property type="project" value="UniProtKB-KW"/>
</dbReference>
<dbReference type="GO" id="GO:0046933">
    <property type="term" value="F:proton-transporting ATP synthase activity, rotational mechanism"/>
    <property type="evidence" value="ECO:0007669"/>
    <property type="project" value="TreeGrafter"/>
</dbReference>
<dbReference type="Gene3D" id="3.40.50.12240">
    <property type="match status" value="1"/>
</dbReference>
<dbReference type="InterPro" id="IPR050053">
    <property type="entry name" value="ATPase_alpha/beta_chains"/>
</dbReference>
<dbReference type="InterPro" id="IPR000194">
    <property type="entry name" value="ATPase_F1/V1/A1_a/bsu_nucl-bd"/>
</dbReference>
<dbReference type="InterPro" id="IPR027417">
    <property type="entry name" value="P-loop_NTPase"/>
</dbReference>
<dbReference type="PANTHER" id="PTHR15184">
    <property type="entry name" value="ATP SYNTHASE"/>
    <property type="match status" value="1"/>
</dbReference>
<dbReference type="PANTHER" id="PTHR15184:SF71">
    <property type="entry name" value="ATP SYNTHASE SUBUNIT BETA, MITOCHONDRIAL"/>
    <property type="match status" value="1"/>
</dbReference>
<dbReference type="Pfam" id="PF00006">
    <property type="entry name" value="ATP-synt_ab"/>
    <property type="match status" value="1"/>
</dbReference>
<dbReference type="SUPFAM" id="SSF52540">
    <property type="entry name" value="P-loop containing nucleoside triphosphate hydrolases"/>
    <property type="match status" value="1"/>
</dbReference>
<comment type="function">
    <text evidence="1">Produces ATP from ADP in the presence of a proton gradient across the membrane. The catalytic sites are hosted primarily by the beta subunits (By similarity).</text>
</comment>
<comment type="catalytic activity">
    <reaction evidence="2">
        <text>ATP + H2O + 4 H(+)(in) = ADP + phosphate + 5 H(+)(out)</text>
        <dbReference type="Rhea" id="RHEA:57720"/>
        <dbReference type="ChEBI" id="CHEBI:15377"/>
        <dbReference type="ChEBI" id="CHEBI:15378"/>
        <dbReference type="ChEBI" id="CHEBI:30616"/>
        <dbReference type="ChEBI" id="CHEBI:43474"/>
        <dbReference type="ChEBI" id="CHEBI:456216"/>
        <dbReference type="EC" id="7.1.2.2"/>
    </reaction>
</comment>
<comment type="subunit">
    <text evidence="1">F-type ATPases have 2 components, CF(1) - the catalytic core - and CF(0) - the membrane proton channel. CF(1) has five subunits: alpha(3), beta(3), gamma(1), delta(1), epsilon(1). CF(0) has three main subunits: a(1), b(2) and c(9-12). The alpha and beta chains form an alternating ring which encloses part of the gamma chain. CF(1) is attached to CF(0) by a central stalk formed by the gamma and epsilon chains, while a peripheral stalk is formed by the delta and b chains (By similarity).</text>
</comment>
<comment type="subcellular location">
    <subcellularLocation>
        <location evidence="1">Cell membrane</location>
        <topology evidence="1">Peripheral membrane protein</topology>
    </subcellularLocation>
</comment>
<comment type="similarity">
    <text evidence="3">Belongs to the ATPase alpha/beta chains family.</text>
</comment>
<comment type="sequence caution" evidence="3">
    <conflict type="erroneous initiation">
        <sequence resource="EMBL-CDS" id="AAA26851"/>
    </conflict>
</comment>
<sequence>MKESVIEKTAMVFGQMNEPPGARMRVALTGLTLAEYFRDVEGQDVLLFIDNIFRFTQAGSEVSALLGRMPSAVGYQPTL</sequence>
<evidence type="ECO:0000250" key="1"/>
<evidence type="ECO:0000255" key="2">
    <source>
        <dbReference type="PROSITE-ProRule" id="PRU10106"/>
    </source>
</evidence>
<evidence type="ECO:0000305" key="3"/>
<proteinExistence type="inferred from homology"/>
<protein>
    <recommendedName>
        <fullName>ATP synthase subunit beta</fullName>
        <ecNumber>7.1.2.2</ecNumber>
    </recommendedName>
    <alternativeName>
        <fullName>ATP synthase F1 sector subunit beta</fullName>
    </alternativeName>
    <alternativeName>
        <fullName>F-ATPase subunit beta</fullName>
    </alternativeName>
</protein>
<feature type="chain" id="PRO_0000144477" description="ATP synthase subunit beta">
    <location>
        <begin position="1" status="less than"/>
        <end position="79" status="greater than"/>
    </location>
</feature>
<feature type="non-terminal residue">
    <location>
        <position position="1"/>
    </location>
</feature>
<feature type="non-terminal residue">
    <location>
        <position position="79"/>
    </location>
</feature>